<dbReference type="EC" id="3.4.14.9"/>
<dbReference type="EMBL" id="AY665254">
    <property type="protein sequence ID" value="AAV74292.1"/>
    <property type="molecule type" value="mRNA"/>
</dbReference>
<dbReference type="RefSeq" id="NP_001013025.1">
    <property type="nucleotide sequence ID" value="NM_001013007.1"/>
</dbReference>
<dbReference type="SMR" id="Q5IS74"/>
<dbReference type="FunCoup" id="Q5IS74">
    <property type="interactions" value="739"/>
</dbReference>
<dbReference type="STRING" id="9598.ENSPTRP00000005774"/>
<dbReference type="MEROPS" id="S53.003"/>
<dbReference type="GlyCosmos" id="Q5IS74">
    <property type="glycosylation" value="5 sites, No reported glycans"/>
</dbReference>
<dbReference type="PaxDb" id="9598-ENSPTRP00000005774"/>
<dbReference type="Ensembl" id="ENSPTRT00000006261.6">
    <property type="protein sequence ID" value="ENSPTRP00000005774.5"/>
    <property type="gene ID" value="ENSPTRG00000003299.7"/>
</dbReference>
<dbReference type="GeneID" id="450999"/>
<dbReference type="KEGG" id="ptr:450999"/>
<dbReference type="CTD" id="1200"/>
<dbReference type="VGNC" id="VGNC:10187">
    <property type="gene designation" value="TPP1"/>
</dbReference>
<dbReference type="eggNOG" id="ENOG502QR6D">
    <property type="taxonomic scope" value="Eukaryota"/>
</dbReference>
<dbReference type="GeneTree" id="ENSGT00390000008684"/>
<dbReference type="HOGENOM" id="CLU_013783_5_1_1"/>
<dbReference type="InParanoid" id="Q5IS74"/>
<dbReference type="OMA" id="YARSVCN"/>
<dbReference type="TreeFam" id="TF333497"/>
<dbReference type="Proteomes" id="UP000002277">
    <property type="component" value="Chromosome 11"/>
</dbReference>
<dbReference type="Bgee" id="ENSPTRG00000003299">
    <property type="expression patterns" value="Expressed in cortex of kidney and 21 other cell types or tissues"/>
</dbReference>
<dbReference type="GO" id="GO:0005794">
    <property type="term" value="C:Golgi apparatus"/>
    <property type="evidence" value="ECO:0000250"/>
    <property type="project" value="UniProtKB"/>
</dbReference>
<dbReference type="GO" id="GO:0005764">
    <property type="term" value="C:lysosome"/>
    <property type="evidence" value="ECO:0000250"/>
    <property type="project" value="UniProtKB"/>
</dbReference>
<dbReference type="GO" id="GO:0042470">
    <property type="term" value="C:melanosome"/>
    <property type="evidence" value="ECO:0007669"/>
    <property type="project" value="UniProtKB-SubCell"/>
</dbReference>
<dbReference type="GO" id="GO:0045121">
    <property type="term" value="C:membrane raft"/>
    <property type="evidence" value="ECO:0000250"/>
    <property type="project" value="UniProtKB"/>
</dbReference>
<dbReference type="GO" id="GO:0055037">
    <property type="term" value="C:recycling endosome"/>
    <property type="evidence" value="ECO:0000250"/>
    <property type="project" value="UniProtKB"/>
</dbReference>
<dbReference type="GO" id="GO:0004175">
    <property type="term" value="F:endopeptidase activity"/>
    <property type="evidence" value="ECO:0000318"/>
    <property type="project" value="GO_Central"/>
</dbReference>
<dbReference type="GO" id="GO:0035727">
    <property type="term" value="F:lysophosphatidic acid binding"/>
    <property type="evidence" value="ECO:0000250"/>
    <property type="project" value="UniProtKB"/>
</dbReference>
<dbReference type="GO" id="GO:0046872">
    <property type="term" value="F:metal ion binding"/>
    <property type="evidence" value="ECO:0007669"/>
    <property type="project" value="UniProtKB-KW"/>
</dbReference>
<dbReference type="GO" id="GO:0008233">
    <property type="term" value="F:peptidase activity"/>
    <property type="evidence" value="ECO:0000250"/>
    <property type="project" value="UniProtKB"/>
</dbReference>
<dbReference type="GO" id="GO:0004252">
    <property type="term" value="F:serine-type endopeptidase activity"/>
    <property type="evidence" value="ECO:0007669"/>
    <property type="project" value="InterPro"/>
</dbReference>
<dbReference type="GO" id="GO:0008236">
    <property type="term" value="F:serine-type peptidase activity"/>
    <property type="evidence" value="ECO:0000250"/>
    <property type="project" value="UniProtKB"/>
</dbReference>
<dbReference type="GO" id="GO:0120146">
    <property type="term" value="F:sulfatide binding"/>
    <property type="evidence" value="ECO:0000250"/>
    <property type="project" value="UniProtKB"/>
</dbReference>
<dbReference type="GO" id="GO:0008240">
    <property type="term" value="F:tripeptidyl-peptidase activity"/>
    <property type="evidence" value="ECO:0000318"/>
    <property type="project" value="GO_Central"/>
</dbReference>
<dbReference type="GO" id="GO:0045453">
    <property type="term" value="P:bone resorption"/>
    <property type="evidence" value="ECO:0000250"/>
    <property type="project" value="UniProtKB"/>
</dbReference>
<dbReference type="GO" id="GO:0007417">
    <property type="term" value="P:central nervous system development"/>
    <property type="evidence" value="ECO:0000318"/>
    <property type="project" value="GO_Central"/>
</dbReference>
<dbReference type="GO" id="GO:0030855">
    <property type="term" value="P:epithelial cell differentiation"/>
    <property type="evidence" value="ECO:0007669"/>
    <property type="project" value="Ensembl"/>
</dbReference>
<dbReference type="GO" id="GO:1905146">
    <property type="term" value="P:lysosomal protein catabolic process"/>
    <property type="evidence" value="ECO:0007669"/>
    <property type="project" value="Ensembl"/>
</dbReference>
<dbReference type="GO" id="GO:0007040">
    <property type="term" value="P:lysosome organization"/>
    <property type="evidence" value="ECO:0007669"/>
    <property type="project" value="Ensembl"/>
</dbReference>
<dbReference type="GO" id="GO:0007399">
    <property type="term" value="P:nervous system development"/>
    <property type="evidence" value="ECO:0000250"/>
    <property type="project" value="UniProtKB"/>
</dbReference>
<dbReference type="GO" id="GO:0050885">
    <property type="term" value="P:neuromuscular process controlling balance"/>
    <property type="evidence" value="ECO:0007669"/>
    <property type="project" value="Ensembl"/>
</dbReference>
<dbReference type="GO" id="GO:0043171">
    <property type="term" value="P:peptide catabolic process"/>
    <property type="evidence" value="ECO:0000250"/>
    <property type="project" value="UniProtKB"/>
</dbReference>
<dbReference type="GO" id="GO:0070198">
    <property type="term" value="P:protein localization to chromosome, telomeric region"/>
    <property type="evidence" value="ECO:0007669"/>
    <property type="project" value="Ensembl"/>
</dbReference>
<dbReference type="GO" id="GO:0006508">
    <property type="term" value="P:proteolysis"/>
    <property type="evidence" value="ECO:0000250"/>
    <property type="project" value="UniProtKB"/>
</dbReference>
<dbReference type="CDD" id="cd04056">
    <property type="entry name" value="Peptidases_S53"/>
    <property type="match status" value="1"/>
</dbReference>
<dbReference type="CDD" id="cd11377">
    <property type="entry name" value="Pro-peptidase_S53"/>
    <property type="match status" value="1"/>
</dbReference>
<dbReference type="FunFam" id="3.40.50.200:FF:000012">
    <property type="entry name" value="Tripeptidyl-peptidase 1 preproprotein"/>
    <property type="match status" value="1"/>
</dbReference>
<dbReference type="Gene3D" id="3.40.50.200">
    <property type="entry name" value="Peptidase S8/S53 domain"/>
    <property type="match status" value="1"/>
</dbReference>
<dbReference type="InterPro" id="IPR000209">
    <property type="entry name" value="Peptidase_S8/S53_dom"/>
</dbReference>
<dbReference type="InterPro" id="IPR036852">
    <property type="entry name" value="Peptidase_S8/S53_dom_sf"/>
</dbReference>
<dbReference type="InterPro" id="IPR015366">
    <property type="entry name" value="S53_propep"/>
</dbReference>
<dbReference type="InterPro" id="IPR030400">
    <property type="entry name" value="Sedolisin_dom"/>
</dbReference>
<dbReference type="InterPro" id="IPR050819">
    <property type="entry name" value="Tripeptidyl-peptidase_I"/>
</dbReference>
<dbReference type="PANTHER" id="PTHR14218">
    <property type="entry name" value="PROTEASE S8 TRIPEPTIDYL PEPTIDASE I CLN2"/>
    <property type="match status" value="1"/>
</dbReference>
<dbReference type="PANTHER" id="PTHR14218:SF15">
    <property type="entry name" value="TRIPEPTIDYL-PEPTIDASE 1"/>
    <property type="match status" value="1"/>
</dbReference>
<dbReference type="Pfam" id="PF00082">
    <property type="entry name" value="Peptidase_S8"/>
    <property type="match status" value="1"/>
</dbReference>
<dbReference type="Pfam" id="PF09286">
    <property type="entry name" value="Pro-kuma_activ"/>
    <property type="match status" value="1"/>
</dbReference>
<dbReference type="SMART" id="SM00944">
    <property type="entry name" value="Pro-kuma_activ"/>
    <property type="match status" value="1"/>
</dbReference>
<dbReference type="SUPFAM" id="SSF54897">
    <property type="entry name" value="Protease propeptides/inhibitors"/>
    <property type="match status" value="1"/>
</dbReference>
<dbReference type="SUPFAM" id="SSF52743">
    <property type="entry name" value="Subtilisin-like"/>
    <property type="match status" value="1"/>
</dbReference>
<dbReference type="PROSITE" id="PS51695">
    <property type="entry name" value="SEDOLISIN"/>
    <property type="match status" value="1"/>
</dbReference>
<comment type="function">
    <text evidence="2">Lysosomal serine protease with tripeptidyl-peptidase I activity. May act as a non-specific lysosomal peptidase which generates tripeptides from the breakdown products produced by lysosomal proteinases. Requires substrates with an unsubstituted N-terminus (By similarity).</text>
</comment>
<comment type="catalytic activity">
    <reaction>
        <text>Release of an N-terminal tripeptide from a polypeptide, but also has endopeptidase activity.</text>
        <dbReference type="EC" id="3.4.14.9"/>
    </reaction>
</comment>
<comment type="cofactor">
    <cofactor evidence="1">
        <name>Ca(2+)</name>
        <dbReference type="ChEBI" id="CHEBI:29108"/>
    </cofactor>
    <text evidence="1">Binds 1 Ca(2+) ion per subunit.</text>
</comment>
<comment type="subunit">
    <text evidence="1">Monomer. Interacts with CLN5. Interacts with CLN3 (By similarity).</text>
</comment>
<comment type="subcellular location">
    <subcellularLocation>
        <location evidence="1">Lysosome</location>
    </subcellularLocation>
    <subcellularLocation>
        <location evidence="1">Melanosome</location>
    </subcellularLocation>
</comment>
<comment type="PTM">
    <text evidence="1">Activated by autocatalytic proteolytical processing upon acidification. N-glycosylation is required for processing and activity (By similarity).</text>
</comment>
<reference key="1">
    <citation type="journal article" date="2004" name="Cell">
        <title>Accelerated evolution of nervous system genes in the origin of Homo sapiens.</title>
        <authorList>
            <person name="Dorus S."/>
            <person name="Vallender E.J."/>
            <person name="Evans P.D."/>
            <person name="Anderson J.R."/>
            <person name="Gilbert S.L."/>
            <person name="Mahowald M."/>
            <person name="Wyckoff G.J."/>
            <person name="Malcom C.M."/>
            <person name="Lahn B.T."/>
        </authorList>
    </citation>
    <scope>NUCLEOTIDE SEQUENCE [MRNA]</scope>
</reference>
<protein>
    <recommendedName>
        <fullName>Tripeptidyl-peptidase 1</fullName>
        <shortName>TPP-1</shortName>
        <ecNumber>3.4.14.9</ecNumber>
    </recommendedName>
    <alternativeName>
        <fullName>Tripeptidyl aminopeptidase</fullName>
    </alternativeName>
    <alternativeName>
        <fullName>Tripeptidyl-peptidase I</fullName>
        <shortName>TPP-I</shortName>
    </alternativeName>
</protein>
<sequence>MGLQACLLGLFALILSGKCSYSPEPDQRRTLPPGWVSLGRADPEEELSLTFALRQQNVERLSELVQAVSDPSSPQYGKYLTLENVADLVRPSPLTLRTVQKWLLAAGARKCHSVITQDFLTCWLSIRQAELLLPGAEFHHYVGGPTETHVVRSPHPYQLPQALAPHVDFVGGLHRFPPTSSLRQRPEPQVTGTVGLHLGVTPSVIRKRYNLTSQDVGSGTSNNSQACAQFLEQYFHDSDLAQFMRLFGGNFAHQASVARVVGQQGRGRAGIEASLDVQYLMSAGANISTWVYSSPGRHEGQEPFLQWLMLLSNESALPHVHTVSYGDDEDSLSSAYIQRVNTELMKAAARGLTLLFASGDSGAGCWSVSGRHQFRPTFPASSPYVTTVGGTSFQEPFLITNEIVDYISGGGFSNVFPRPSYQEEAVTKFLSSSPHLPPSSYFNASGRAYPDVAALSDGYWVVSNRVPIPWVSGTSASTPVFGGILSLINEHRILSGRPPLGFLNPRLYQQHGAGLFDVTRGCHESCLDEEVEGQGFCSGPGWDPVTGWGTPNFPALLKTLLNP</sequence>
<feature type="signal peptide" evidence="1">
    <location>
        <begin position="1"/>
        <end position="19"/>
    </location>
</feature>
<feature type="propeptide" id="PRO_0000027380" description="Removed in mature form" evidence="1">
    <location>
        <begin position="20"/>
        <end position="195"/>
    </location>
</feature>
<feature type="chain" id="PRO_0000027381" description="Tripeptidyl-peptidase 1">
    <location>
        <begin position="196"/>
        <end position="563"/>
    </location>
</feature>
<feature type="domain" description="Peptidase S53">
    <location>
        <begin position="199"/>
        <end position="563"/>
    </location>
</feature>
<feature type="active site" description="Charge relay system" evidence="1">
    <location>
        <position position="272"/>
    </location>
</feature>
<feature type="active site" description="Charge relay system" evidence="1">
    <location>
        <position position="276"/>
    </location>
</feature>
<feature type="active site" description="Charge relay system" evidence="1">
    <location>
        <position position="475"/>
    </location>
</feature>
<feature type="binding site" evidence="1">
    <location>
        <position position="517"/>
    </location>
    <ligand>
        <name>Ca(2+)</name>
        <dbReference type="ChEBI" id="CHEBI:29108"/>
    </ligand>
</feature>
<feature type="binding site" evidence="1">
    <location>
        <position position="518"/>
    </location>
    <ligand>
        <name>Ca(2+)</name>
        <dbReference type="ChEBI" id="CHEBI:29108"/>
    </ligand>
</feature>
<feature type="binding site" evidence="1">
    <location>
        <position position="539"/>
    </location>
    <ligand>
        <name>Ca(2+)</name>
        <dbReference type="ChEBI" id="CHEBI:29108"/>
    </ligand>
</feature>
<feature type="binding site" evidence="1">
    <location>
        <position position="541"/>
    </location>
    <ligand>
        <name>Ca(2+)</name>
        <dbReference type="ChEBI" id="CHEBI:29108"/>
    </ligand>
</feature>
<feature type="binding site" evidence="1">
    <location>
        <position position="543"/>
    </location>
    <ligand>
        <name>Ca(2+)</name>
        <dbReference type="ChEBI" id="CHEBI:29108"/>
    </ligand>
</feature>
<feature type="glycosylation site" description="N-linked (GlcNAc...) asparagine" evidence="3">
    <location>
        <position position="210"/>
    </location>
</feature>
<feature type="glycosylation site" description="N-linked (GlcNAc...) asparagine" evidence="3">
    <location>
        <position position="222"/>
    </location>
</feature>
<feature type="glycosylation site" description="N-linked (GlcNAc...) asparagine" evidence="3">
    <location>
        <position position="286"/>
    </location>
</feature>
<feature type="glycosylation site" description="N-linked (GlcNAc...) asparagine" evidence="3">
    <location>
        <position position="313"/>
    </location>
</feature>
<feature type="glycosylation site" description="N-linked (GlcNAc...) asparagine" evidence="3">
    <location>
        <position position="443"/>
    </location>
</feature>
<feature type="disulfide bond" evidence="1">
    <location>
        <begin position="111"/>
        <end position="122"/>
    </location>
</feature>
<feature type="disulfide bond" evidence="1">
    <location>
        <begin position="365"/>
        <end position="526"/>
    </location>
</feature>
<feature type="disulfide bond" evidence="1">
    <location>
        <begin position="522"/>
        <end position="537"/>
    </location>
</feature>
<accession>Q5IS74</accession>
<gene>
    <name type="primary">TPP1</name>
    <name type="synonym">CLN2</name>
</gene>
<keyword id="KW-0068">Autocatalytic cleavage</keyword>
<keyword id="KW-0106">Calcium</keyword>
<keyword id="KW-1015">Disulfide bond</keyword>
<keyword id="KW-0325">Glycoprotein</keyword>
<keyword id="KW-0378">Hydrolase</keyword>
<keyword id="KW-0458">Lysosome</keyword>
<keyword id="KW-0479">Metal-binding</keyword>
<keyword id="KW-0645">Protease</keyword>
<keyword id="KW-1185">Reference proteome</keyword>
<keyword id="KW-0720">Serine protease</keyword>
<keyword id="KW-0732">Signal</keyword>
<keyword id="KW-0865">Zymogen</keyword>
<proteinExistence type="evidence at transcript level"/>
<organism>
    <name type="scientific">Pan troglodytes</name>
    <name type="common">Chimpanzee</name>
    <dbReference type="NCBI Taxonomy" id="9598"/>
    <lineage>
        <taxon>Eukaryota</taxon>
        <taxon>Metazoa</taxon>
        <taxon>Chordata</taxon>
        <taxon>Craniata</taxon>
        <taxon>Vertebrata</taxon>
        <taxon>Euteleostomi</taxon>
        <taxon>Mammalia</taxon>
        <taxon>Eutheria</taxon>
        <taxon>Euarchontoglires</taxon>
        <taxon>Primates</taxon>
        <taxon>Haplorrhini</taxon>
        <taxon>Catarrhini</taxon>
        <taxon>Hominidae</taxon>
        <taxon>Pan</taxon>
    </lineage>
</organism>
<evidence type="ECO:0000250" key="1">
    <source>
        <dbReference type="UniProtKB" id="O14773"/>
    </source>
</evidence>
<evidence type="ECO:0000250" key="2">
    <source>
        <dbReference type="UniProtKB" id="Q9EQV6"/>
    </source>
</evidence>
<evidence type="ECO:0000255" key="3"/>
<name>TPP1_PANTR</name>